<sequence>MAGRIQNTIRNFLDSESSGGLLLIASAAAALLVANSQLSEAYFGALHAYLGPLSVQHWVNDALMAVFFLMVGLEIKREMVDGHLSSWPRRILPGAAAAAGMAVPALVYLAFNLNNGAAHGWAIPAATDIAFALGVISLLGPRVPTSLKVFLAALAIIDDLGAVIVIGLFYTTGVSLMDLGLAAAGVAALVALNLSGVKRLTPYLLLGLVLWFFTYRSGVHATIAGVLLALTIPIKRTPAKPEATVSESPLHLLEHSLIKPVSFIIVPIFGFANAGVSFSGLGMEAFFAPVTMGVAAGLAIGKLVGIFGAVLLLVKTGIVGLPAGASWPQMLGTTLLCGIGFTMSLFISLLAFDDVLLQNEAKIGILIGSLVAGLAGFIVLRFSKRADGRNFSQ</sequence>
<organism>
    <name type="scientific">Brucella anthropi (strain ATCC 49188 / DSM 6882 / CCUG 24695 / JCM 21032 / LMG 3331 / NBRC 15819 / NCTC 12168 / Alc 37)</name>
    <name type="common">Ochrobactrum anthropi</name>
    <dbReference type="NCBI Taxonomy" id="439375"/>
    <lineage>
        <taxon>Bacteria</taxon>
        <taxon>Pseudomonadati</taxon>
        <taxon>Pseudomonadota</taxon>
        <taxon>Alphaproteobacteria</taxon>
        <taxon>Hyphomicrobiales</taxon>
        <taxon>Brucellaceae</taxon>
        <taxon>Brucella/Ochrobactrum group</taxon>
        <taxon>Brucella</taxon>
    </lineage>
</organism>
<evidence type="ECO:0000255" key="1">
    <source>
        <dbReference type="HAMAP-Rule" id="MF_01844"/>
    </source>
</evidence>
<protein>
    <recommendedName>
        <fullName evidence="1">Na(+)/H(+) antiporter NhaA 2</fullName>
    </recommendedName>
    <alternativeName>
        <fullName evidence="1">Sodium/proton antiporter NhaA 2</fullName>
    </alternativeName>
</protein>
<dbReference type="EMBL" id="CP000758">
    <property type="protein sequence ID" value="ABS15144.1"/>
    <property type="molecule type" value="Genomic_DNA"/>
</dbReference>
<dbReference type="RefSeq" id="WP_012092265.1">
    <property type="nucleotide sequence ID" value="NC_009667.1"/>
</dbReference>
<dbReference type="SMR" id="A6X1P0"/>
<dbReference type="STRING" id="439375.Oant_2430"/>
<dbReference type="KEGG" id="oan:Oant_2430"/>
<dbReference type="PATRIC" id="fig|439375.7.peg.2565"/>
<dbReference type="eggNOG" id="COG3004">
    <property type="taxonomic scope" value="Bacteria"/>
</dbReference>
<dbReference type="HOGENOM" id="CLU_015803_1_0_5"/>
<dbReference type="Proteomes" id="UP000002301">
    <property type="component" value="Chromosome 1"/>
</dbReference>
<dbReference type="GO" id="GO:0005886">
    <property type="term" value="C:plasma membrane"/>
    <property type="evidence" value="ECO:0007669"/>
    <property type="project" value="UniProtKB-SubCell"/>
</dbReference>
<dbReference type="GO" id="GO:0015385">
    <property type="term" value="F:sodium:proton antiporter activity"/>
    <property type="evidence" value="ECO:0007669"/>
    <property type="project" value="TreeGrafter"/>
</dbReference>
<dbReference type="GO" id="GO:0006885">
    <property type="term" value="P:regulation of pH"/>
    <property type="evidence" value="ECO:0007669"/>
    <property type="project" value="InterPro"/>
</dbReference>
<dbReference type="Gene3D" id="1.20.1530.10">
    <property type="entry name" value="Na+/H+ antiporter like domain"/>
    <property type="match status" value="1"/>
</dbReference>
<dbReference type="HAMAP" id="MF_01844">
    <property type="entry name" value="NhaA"/>
    <property type="match status" value="1"/>
</dbReference>
<dbReference type="InterPro" id="IPR023171">
    <property type="entry name" value="Na/H_antiporter_dom_sf"/>
</dbReference>
<dbReference type="InterPro" id="IPR004670">
    <property type="entry name" value="NhaA"/>
</dbReference>
<dbReference type="NCBIfam" id="TIGR00773">
    <property type="entry name" value="NhaA"/>
    <property type="match status" value="1"/>
</dbReference>
<dbReference type="NCBIfam" id="NF007111">
    <property type="entry name" value="PRK09560.1"/>
    <property type="match status" value="1"/>
</dbReference>
<dbReference type="NCBIfam" id="NF007112">
    <property type="entry name" value="PRK09561.1"/>
    <property type="match status" value="1"/>
</dbReference>
<dbReference type="PANTHER" id="PTHR30341:SF0">
    <property type="entry name" value="NA(+)_H(+) ANTIPORTER NHAA"/>
    <property type="match status" value="1"/>
</dbReference>
<dbReference type="PANTHER" id="PTHR30341">
    <property type="entry name" value="SODIUM ION/PROTON ANTIPORTER NHAA-RELATED"/>
    <property type="match status" value="1"/>
</dbReference>
<dbReference type="Pfam" id="PF06965">
    <property type="entry name" value="Na_H_antiport_1"/>
    <property type="match status" value="1"/>
</dbReference>
<proteinExistence type="inferred from homology"/>
<keyword id="KW-0050">Antiport</keyword>
<keyword id="KW-0997">Cell inner membrane</keyword>
<keyword id="KW-1003">Cell membrane</keyword>
<keyword id="KW-0406">Ion transport</keyword>
<keyword id="KW-0472">Membrane</keyword>
<keyword id="KW-1185">Reference proteome</keyword>
<keyword id="KW-0915">Sodium</keyword>
<keyword id="KW-0739">Sodium transport</keyword>
<keyword id="KW-0812">Transmembrane</keyword>
<keyword id="KW-1133">Transmembrane helix</keyword>
<keyword id="KW-0813">Transport</keyword>
<name>NHAA2_BRUA4</name>
<feature type="chain" id="PRO_0000334353" description="Na(+)/H(+) antiporter NhaA 2">
    <location>
        <begin position="1"/>
        <end position="393"/>
    </location>
</feature>
<feature type="transmembrane region" description="Helical" evidence="1">
    <location>
        <begin position="18"/>
        <end position="38"/>
    </location>
</feature>
<feature type="transmembrane region" description="Helical" evidence="1">
    <location>
        <begin position="53"/>
        <end position="73"/>
    </location>
</feature>
<feature type="transmembrane region" description="Helical" evidence="1">
    <location>
        <begin position="91"/>
        <end position="111"/>
    </location>
</feature>
<feature type="transmembrane region" description="Helical" evidence="1">
    <location>
        <begin position="120"/>
        <end position="140"/>
    </location>
</feature>
<feature type="transmembrane region" description="Helical" evidence="1">
    <location>
        <begin position="149"/>
        <end position="169"/>
    </location>
</feature>
<feature type="transmembrane region" description="Helical" evidence="1">
    <location>
        <begin position="172"/>
        <end position="192"/>
    </location>
</feature>
<feature type="transmembrane region" description="Helical" evidence="1">
    <location>
        <begin position="208"/>
        <end position="228"/>
    </location>
</feature>
<feature type="transmembrane region" description="Helical" evidence="1">
    <location>
        <begin position="263"/>
        <end position="283"/>
    </location>
</feature>
<feature type="transmembrane region" description="Helical" evidence="1">
    <location>
        <begin position="294"/>
        <end position="314"/>
    </location>
</feature>
<feature type="transmembrane region" description="Helical" evidence="1">
    <location>
        <begin position="332"/>
        <end position="352"/>
    </location>
</feature>
<feature type="transmembrane region" description="Helical" evidence="1">
    <location>
        <begin position="363"/>
        <end position="383"/>
    </location>
</feature>
<comment type="function">
    <text evidence="1">Na(+)/H(+) antiporter that extrudes sodium in exchange for external protons.</text>
</comment>
<comment type="catalytic activity">
    <reaction evidence="1">
        <text>Na(+)(in) + 2 H(+)(out) = Na(+)(out) + 2 H(+)(in)</text>
        <dbReference type="Rhea" id="RHEA:29251"/>
        <dbReference type="ChEBI" id="CHEBI:15378"/>
        <dbReference type="ChEBI" id="CHEBI:29101"/>
    </reaction>
    <physiologicalReaction direction="left-to-right" evidence="1">
        <dbReference type="Rhea" id="RHEA:29252"/>
    </physiologicalReaction>
</comment>
<comment type="subcellular location">
    <subcellularLocation>
        <location evidence="1">Cell inner membrane</location>
        <topology evidence="1">Multi-pass membrane protein</topology>
    </subcellularLocation>
</comment>
<comment type="similarity">
    <text evidence="1">Belongs to the NhaA Na(+)/H(+) (TC 2.A.33) antiporter family.</text>
</comment>
<gene>
    <name evidence="1" type="primary">nhaA2</name>
    <name type="ordered locus">Oant_2430</name>
</gene>
<accession>A6X1P0</accession>
<reference key="1">
    <citation type="journal article" date="2011" name="J. Bacteriol.">
        <title>Genome of Ochrobactrum anthropi ATCC 49188 T, a versatile opportunistic pathogen and symbiont of several eukaryotic hosts.</title>
        <authorList>
            <person name="Chain P.S."/>
            <person name="Lang D.M."/>
            <person name="Comerci D.J."/>
            <person name="Malfatti S.A."/>
            <person name="Vergez L.M."/>
            <person name="Shin M."/>
            <person name="Ugalde R.A."/>
            <person name="Garcia E."/>
            <person name="Tolmasky M.E."/>
        </authorList>
    </citation>
    <scope>NUCLEOTIDE SEQUENCE [LARGE SCALE GENOMIC DNA]</scope>
    <source>
        <strain>ATCC 49188 / DSM 6882 / CCUG 24695 / JCM 21032 / LMG 3331 / NBRC 15819 / NCTC 12168 / Alc 37</strain>
    </source>
</reference>